<dbReference type="EC" id="2.1.1.163" evidence="1"/>
<dbReference type="EC" id="2.1.1.201" evidence="1"/>
<dbReference type="EMBL" id="CR522870">
    <property type="protein sequence ID" value="CAG36061.1"/>
    <property type="molecule type" value="Genomic_DNA"/>
</dbReference>
<dbReference type="SMR" id="Q6ANL3"/>
<dbReference type="STRING" id="177439.DP1332"/>
<dbReference type="KEGG" id="dps:DP1332"/>
<dbReference type="eggNOG" id="COG2226">
    <property type="taxonomic scope" value="Bacteria"/>
</dbReference>
<dbReference type="HOGENOM" id="CLU_037990_0_0_7"/>
<dbReference type="OrthoDB" id="9808140at2"/>
<dbReference type="UniPathway" id="UPA00079">
    <property type="reaction ID" value="UER00169"/>
</dbReference>
<dbReference type="UniPathway" id="UPA00232"/>
<dbReference type="Proteomes" id="UP000000602">
    <property type="component" value="Chromosome"/>
</dbReference>
<dbReference type="GO" id="GO:0008425">
    <property type="term" value="F:2-methoxy-6-polyprenyl-1,4-benzoquinol methyltransferase activity"/>
    <property type="evidence" value="ECO:0007669"/>
    <property type="project" value="UniProtKB-EC"/>
</dbReference>
<dbReference type="GO" id="GO:0043770">
    <property type="term" value="F:demethylmenaquinone methyltransferase activity"/>
    <property type="evidence" value="ECO:0007669"/>
    <property type="project" value="UniProtKB-UniRule"/>
</dbReference>
<dbReference type="GO" id="GO:0009234">
    <property type="term" value="P:menaquinone biosynthetic process"/>
    <property type="evidence" value="ECO:0007669"/>
    <property type="project" value="UniProtKB-UniRule"/>
</dbReference>
<dbReference type="GO" id="GO:0032259">
    <property type="term" value="P:methylation"/>
    <property type="evidence" value="ECO:0007669"/>
    <property type="project" value="UniProtKB-KW"/>
</dbReference>
<dbReference type="CDD" id="cd02440">
    <property type="entry name" value="AdoMet_MTases"/>
    <property type="match status" value="1"/>
</dbReference>
<dbReference type="Gene3D" id="3.40.50.150">
    <property type="entry name" value="Vaccinia Virus protein VP39"/>
    <property type="match status" value="1"/>
</dbReference>
<dbReference type="HAMAP" id="MF_01813">
    <property type="entry name" value="MenG_UbiE_methyltr"/>
    <property type="match status" value="1"/>
</dbReference>
<dbReference type="InterPro" id="IPR029063">
    <property type="entry name" value="SAM-dependent_MTases_sf"/>
</dbReference>
<dbReference type="InterPro" id="IPR004033">
    <property type="entry name" value="UbiE/COQ5_MeTrFase"/>
</dbReference>
<dbReference type="NCBIfam" id="TIGR01934">
    <property type="entry name" value="MenG_MenH_UbiE"/>
    <property type="match status" value="1"/>
</dbReference>
<dbReference type="NCBIfam" id="NF001244">
    <property type="entry name" value="PRK00216.1-5"/>
    <property type="match status" value="1"/>
</dbReference>
<dbReference type="PANTHER" id="PTHR43591:SF24">
    <property type="entry name" value="2-METHOXY-6-POLYPRENYL-1,4-BENZOQUINOL METHYLASE, MITOCHONDRIAL"/>
    <property type="match status" value="1"/>
</dbReference>
<dbReference type="PANTHER" id="PTHR43591">
    <property type="entry name" value="METHYLTRANSFERASE"/>
    <property type="match status" value="1"/>
</dbReference>
<dbReference type="Pfam" id="PF01209">
    <property type="entry name" value="Ubie_methyltran"/>
    <property type="match status" value="1"/>
</dbReference>
<dbReference type="SUPFAM" id="SSF53335">
    <property type="entry name" value="S-adenosyl-L-methionine-dependent methyltransferases"/>
    <property type="match status" value="1"/>
</dbReference>
<dbReference type="PROSITE" id="PS51608">
    <property type="entry name" value="SAM_MT_UBIE"/>
    <property type="match status" value="1"/>
</dbReference>
<feature type="chain" id="PRO_0000193273" description="Ubiquinone/menaquinone biosynthesis C-methyltransferase UbiE">
    <location>
        <begin position="1"/>
        <end position="246"/>
    </location>
</feature>
<feature type="binding site" evidence="1">
    <location>
        <position position="75"/>
    </location>
    <ligand>
        <name>S-adenosyl-L-methionine</name>
        <dbReference type="ChEBI" id="CHEBI:59789"/>
    </ligand>
</feature>
<feature type="binding site" evidence="1">
    <location>
        <position position="95"/>
    </location>
    <ligand>
        <name>S-adenosyl-L-methionine</name>
        <dbReference type="ChEBI" id="CHEBI:59789"/>
    </ligand>
</feature>
<feature type="binding site" evidence="1">
    <location>
        <begin position="119"/>
        <end position="120"/>
    </location>
    <ligand>
        <name>S-adenosyl-L-methionine</name>
        <dbReference type="ChEBI" id="CHEBI:59789"/>
    </ligand>
</feature>
<organism>
    <name type="scientific">Desulfotalea psychrophila (strain LSv54 / DSM 12343)</name>
    <dbReference type="NCBI Taxonomy" id="177439"/>
    <lineage>
        <taxon>Bacteria</taxon>
        <taxon>Pseudomonadati</taxon>
        <taxon>Thermodesulfobacteriota</taxon>
        <taxon>Desulfobulbia</taxon>
        <taxon>Desulfobulbales</taxon>
        <taxon>Desulfocapsaceae</taxon>
        <taxon>Desulfotalea</taxon>
    </lineage>
</organism>
<reference key="1">
    <citation type="journal article" date="2004" name="Environ. Microbiol.">
        <title>The genome of Desulfotalea psychrophila, a sulfate-reducing bacterium from permanently cold Arctic sediments.</title>
        <authorList>
            <person name="Rabus R."/>
            <person name="Ruepp A."/>
            <person name="Frickey T."/>
            <person name="Rattei T."/>
            <person name="Fartmann B."/>
            <person name="Stark M."/>
            <person name="Bauer M."/>
            <person name="Zibat A."/>
            <person name="Lombardot T."/>
            <person name="Becker I."/>
            <person name="Amann J."/>
            <person name="Gellner K."/>
            <person name="Teeling H."/>
            <person name="Leuschner W.D."/>
            <person name="Gloeckner F.-O."/>
            <person name="Lupas A.N."/>
            <person name="Amann R."/>
            <person name="Klenk H.-P."/>
        </authorList>
    </citation>
    <scope>NUCLEOTIDE SEQUENCE [LARGE SCALE GENOMIC DNA]</scope>
    <source>
        <strain>DSM 12343 / LSv54</strain>
    </source>
</reference>
<proteinExistence type="inferred from homology"/>
<evidence type="ECO:0000255" key="1">
    <source>
        <dbReference type="HAMAP-Rule" id="MF_01813"/>
    </source>
</evidence>
<accession>Q6ANL3</accession>
<protein>
    <recommendedName>
        <fullName evidence="1">Ubiquinone/menaquinone biosynthesis C-methyltransferase UbiE</fullName>
        <ecNumber evidence="1">2.1.1.163</ecNumber>
        <ecNumber evidence="1">2.1.1.201</ecNumber>
    </recommendedName>
    <alternativeName>
        <fullName evidence="1">2-methoxy-6-polyprenyl-1,4-benzoquinol methylase</fullName>
    </alternativeName>
    <alternativeName>
        <fullName evidence="1">Demethylmenaquinone methyltransferase</fullName>
    </alternativeName>
</protein>
<comment type="function">
    <text evidence="1">Methyltransferase required for the conversion of demethylmenaquinol (DMKH2) to menaquinol (MKH2) and the conversion of 2-polyprenyl-6-methoxy-1,4-benzoquinol (DDMQH2) to 2-polyprenyl-3-methyl-6-methoxy-1,4-benzoquinol (DMQH2).</text>
</comment>
<comment type="catalytic activity">
    <reaction evidence="1">
        <text>a 2-demethylmenaquinol + S-adenosyl-L-methionine = a menaquinol + S-adenosyl-L-homocysteine + H(+)</text>
        <dbReference type="Rhea" id="RHEA:42640"/>
        <dbReference type="Rhea" id="RHEA-COMP:9539"/>
        <dbReference type="Rhea" id="RHEA-COMP:9563"/>
        <dbReference type="ChEBI" id="CHEBI:15378"/>
        <dbReference type="ChEBI" id="CHEBI:18151"/>
        <dbReference type="ChEBI" id="CHEBI:55437"/>
        <dbReference type="ChEBI" id="CHEBI:57856"/>
        <dbReference type="ChEBI" id="CHEBI:59789"/>
        <dbReference type="EC" id="2.1.1.163"/>
    </reaction>
</comment>
<comment type="catalytic activity">
    <reaction evidence="1">
        <text>a 2-methoxy-6-(all-trans-polyprenyl)benzene-1,4-diol + S-adenosyl-L-methionine = a 5-methoxy-2-methyl-3-(all-trans-polyprenyl)benzene-1,4-diol + S-adenosyl-L-homocysteine + H(+)</text>
        <dbReference type="Rhea" id="RHEA:28286"/>
        <dbReference type="Rhea" id="RHEA-COMP:10858"/>
        <dbReference type="Rhea" id="RHEA-COMP:10859"/>
        <dbReference type="ChEBI" id="CHEBI:15378"/>
        <dbReference type="ChEBI" id="CHEBI:57856"/>
        <dbReference type="ChEBI" id="CHEBI:59789"/>
        <dbReference type="ChEBI" id="CHEBI:84166"/>
        <dbReference type="ChEBI" id="CHEBI:84167"/>
        <dbReference type="EC" id="2.1.1.201"/>
    </reaction>
</comment>
<comment type="pathway">
    <text evidence="1">Quinol/quinone metabolism; menaquinone biosynthesis; menaquinol from 1,4-dihydroxy-2-naphthoate: step 2/2.</text>
</comment>
<comment type="pathway">
    <text evidence="1">Cofactor biosynthesis; ubiquinone biosynthesis.</text>
</comment>
<comment type="similarity">
    <text evidence="1">Belongs to the class I-like SAM-binding methyltransferase superfamily. MenG/UbiE family.</text>
</comment>
<name>UBIE_DESPS</name>
<sequence length="246" mass="27346">MRAQSCSLFLEMKCREEFVLSKGPGVEKMFDAIAGRYDLMNKVMTMGQDQRWRRFVVAKAGDPGAGQVLDLATGTGDIAALMHRSYPRAQVTGGDFSRNMLEEAKKRFAGQGIDWQVCDANKLPFADNTFEAVTFGYLLRNVDDASSVLAEVYRVLKPGGRCVCLDTTPPAKNIIYPFVQFYFRYGIPLLGRMIAADEAAYAYLSGSTMEFHSAEVLADLFRGAGFVDVHYKKFMLGTIGIHWGVK</sequence>
<keyword id="KW-0474">Menaquinone biosynthesis</keyword>
<keyword id="KW-0489">Methyltransferase</keyword>
<keyword id="KW-1185">Reference proteome</keyword>
<keyword id="KW-0949">S-adenosyl-L-methionine</keyword>
<keyword id="KW-0808">Transferase</keyword>
<keyword id="KW-0831">Ubiquinone biosynthesis</keyword>
<gene>
    <name evidence="1" type="primary">ubiE</name>
    <name type="ordered locus">DP1332</name>
</gene>